<proteinExistence type="evidence at protein level"/>
<dbReference type="PDB" id="3A0B">
    <property type="method" value="X-ray"/>
    <property type="resolution" value="3.70 A"/>
    <property type="chains" value="H/h=1-64"/>
</dbReference>
<dbReference type="PDB" id="3A0H">
    <property type="method" value="X-ray"/>
    <property type="resolution" value="4.00 A"/>
    <property type="chains" value="H/h=1-64"/>
</dbReference>
<dbReference type="PDB" id="3WU2">
    <property type="method" value="X-ray"/>
    <property type="resolution" value="1.90 A"/>
    <property type="chains" value="H/h=1-63"/>
</dbReference>
<dbReference type="PDB" id="4IL6">
    <property type="method" value="X-ray"/>
    <property type="resolution" value="2.10 A"/>
    <property type="chains" value="H/h=1-63"/>
</dbReference>
<dbReference type="PDB" id="4UB6">
    <property type="method" value="X-ray"/>
    <property type="resolution" value="1.95 A"/>
    <property type="chains" value="H/h=1-65"/>
</dbReference>
<dbReference type="PDB" id="4UB8">
    <property type="method" value="X-ray"/>
    <property type="resolution" value="1.95 A"/>
    <property type="chains" value="H/h=1-65"/>
</dbReference>
<dbReference type="PDB" id="5B5E">
    <property type="method" value="X-ray"/>
    <property type="resolution" value="1.87 A"/>
    <property type="chains" value="H/h=1-65"/>
</dbReference>
<dbReference type="PDB" id="5B66">
    <property type="method" value="X-ray"/>
    <property type="resolution" value="1.85 A"/>
    <property type="chains" value="H/h=1-65"/>
</dbReference>
<dbReference type="PDB" id="5GTH">
    <property type="method" value="X-ray"/>
    <property type="resolution" value="2.50 A"/>
    <property type="chains" value="H/h=1-65"/>
</dbReference>
<dbReference type="PDB" id="5GTI">
    <property type="method" value="X-ray"/>
    <property type="resolution" value="2.50 A"/>
    <property type="chains" value="H/h=1-65"/>
</dbReference>
<dbReference type="PDB" id="5V2C">
    <property type="method" value="X-ray"/>
    <property type="resolution" value="1.90 A"/>
    <property type="chains" value="H/h=1-65"/>
</dbReference>
<dbReference type="PDB" id="5WS5">
    <property type="method" value="X-ray"/>
    <property type="resolution" value="2.35 A"/>
    <property type="chains" value="H/h=1-65"/>
</dbReference>
<dbReference type="PDB" id="5WS6">
    <property type="method" value="X-ray"/>
    <property type="resolution" value="2.35 A"/>
    <property type="chains" value="H/h=1-65"/>
</dbReference>
<dbReference type="PDB" id="6JLJ">
    <property type="method" value="X-ray"/>
    <property type="resolution" value="2.15 A"/>
    <property type="chains" value="H/h=1-65"/>
</dbReference>
<dbReference type="PDB" id="6JLK">
    <property type="method" value="X-ray"/>
    <property type="resolution" value="2.15 A"/>
    <property type="chains" value="H/h=1-65"/>
</dbReference>
<dbReference type="PDB" id="6JLL">
    <property type="method" value="X-ray"/>
    <property type="resolution" value="2.15 A"/>
    <property type="chains" value="H/h=1-65"/>
</dbReference>
<dbReference type="PDB" id="6JLM">
    <property type="method" value="X-ray"/>
    <property type="resolution" value="2.35 A"/>
    <property type="chains" value="H/h=1-65"/>
</dbReference>
<dbReference type="PDB" id="6JLN">
    <property type="method" value="X-ray"/>
    <property type="resolution" value="2.40 A"/>
    <property type="chains" value="H/h=1-65"/>
</dbReference>
<dbReference type="PDB" id="6JLO">
    <property type="method" value="X-ray"/>
    <property type="resolution" value="2.40 A"/>
    <property type="chains" value="H/h=1-65"/>
</dbReference>
<dbReference type="PDB" id="6JLP">
    <property type="method" value="X-ray"/>
    <property type="resolution" value="2.50 A"/>
    <property type="chains" value="H/h=1-65"/>
</dbReference>
<dbReference type="PDB" id="7CJI">
    <property type="method" value="X-ray"/>
    <property type="resolution" value="2.35 A"/>
    <property type="chains" value="H/h=1-65"/>
</dbReference>
<dbReference type="PDB" id="7CJJ">
    <property type="method" value="X-ray"/>
    <property type="resolution" value="2.40 A"/>
    <property type="chains" value="H/h=1-65"/>
</dbReference>
<dbReference type="PDB" id="7COU">
    <property type="method" value="X-ray"/>
    <property type="resolution" value="2.25 A"/>
    <property type="chains" value="H/h=1-65"/>
</dbReference>
<dbReference type="PDB" id="7CZL">
    <property type="method" value="EM"/>
    <property type="resolution" value="3.78 A"/>
    <property type="chains" value="H/h=1-62"/>
</dbReference>
<dbReference type="PDB" id="7D1T">
    <property type="method" value="EM"/>
    <property type="resolution" value="1.95 A"/>
    <property type="chains" value="H/h=1-63"/>
</dbReference>
<dbReference type="PDB" id="7D1U">
    <property type="method" value="EM"/>
    <property type="resolution" value="2.08 A"/>
    <property type="chains" value="H/h=1-63"/>
</dbReference>
<dbReference type="PDB" id="7DXA">
    <property type="method" value="EM"/>
    <property type="resolution" value="3.14 A"/>
    <property type="chains" value="h=1-65"/>
</dbReference>
<dbReference type="PDB" id="7DXH">
    <property type="method" value="EM"/>
    <property type="resolution" value="3.14 A"/>
    <property type="chains" value="h=1-65"/>
</dbReference>
<dbReference type="PDB" id="7EDA">
    <property type="method" value="EM"/>
    <property type="resolution" value="2.78 A"/>
    <property type="chains" value="H=1-62"/>
</dbReference>
<dbReference type="PDB" id="8GN0">
    <property type="method" value="X-ray"/>
    <property type="resolution" value="2.15 A"/>
    <property type="chains" value="H/h=1-63"/>
</dbReference>
<dbReference type="PDB" id="8GN1">
    <property type="method" value="X-ray"/>
    <property type="resolution" value="2.10 A"/>
    <property type="chains" value="H/h=1-63"/>
</dbReference>
<dbReference type="PDB" id="8GN2">
    <property type="method" value="X-ray"/>
    <property type="resolution" value="1.95 A"/>
    <property type="chains" value="H/h=1-63"/>
</dbReference>
<dbReference type="PDB" id="8IR5">
    <property type="method" value="X-ray"/>
    <property type="resolution" value="2.15 A"/>
    <property type="chains" value="H/h=1-65"/>
</dbReference>
<dbReference type="PDB" id="8IR6">
    <property type="method" value="X-ray"/>
    <property type="resolution" value="2.20 A"/>
    <property type="chains" value="H/h=1-65"/>
</dbReference>
<dbReference type="PDB" id="8IR7">
    <property type="method" value="X-ray"/>
    <property type="resolution" value="2.25 A"/>
    <property type="chains" value="H/h=1-65"/>
</dbReference>
<dbReference type="PDB" id="8IR8">
    <property type="method" value="X-ray"/>
    <property type="resolution" value="2.25 A"/>
    <property type="chains" value="H/h=1-65"/>
</dbReference>
<dbReference type="PDB" id="8IR9">
    <property type="method" value="X-ray"/>
    <property type="resolution" value="2.20 A"/>
    <property type="chains" value="H/h=1-65"/>
</dbReference>
<dbReference type="PDB" id="8IRA">
    <property type="method" value="X-ray"/>
    <property type="resolution" value="2.20 A"/>
    <property type="chains" value="H/h=1-65"/>
</dbReference>
<dbReference type="PDB" id="8IRB">
    <property type="method" value="X-ray"/>
    <property type="resolution" value="2.30 A"/>
    <property type="chains" value="H/h=1-65"/>
</dbReference>
<dbReference type="PDB" id="8IRC">
    <property type="method" value="X-ray"/>
    <property type="resolution" value="2.25 A"/>
    <property type="chains" value="H/h=1-65"/>
</dbReference>
<dbReference type="PDB" id="8IRD">
    <property type="method" value="X-ray"/>
    <property type="resolution" value="2.30 A"/>
    <property type="chains" value="H/h=1-65"/>
</dbReference>
<dbReference type="PDB" id="8IRE">
    <property type="method" value="X-ray"/>
    <property type="resolution" value="2.25 A"/>
    <property type="chains" value="H/h=1-65"/>
</dbReference>
<dbReference type="PDB" id="8IRF">
    <property type="method" value="X-ray"/>
    <property type="resolution" value="2.25 A"/>
    <property type="chains" value="H/h=1-65"/>
</dbReference>
<dbReference type="PDB" id="8IRG">
    <property type="method" value="X-ray"/>
    <property type="resolution" value="2.30 A"/>
    <property type="chains" value="H/h=1-65"/>
</dbReference>
<dbReference type="PDB" id="8IRH">
    <property type="method" value="X-ray"/>
    <property type="resolution" value="2.25 A"/>
    <property type="chains" value="H/h=1-65"/>
</dbReference>
<dbReference type="PDB" id="8IRI">
    <property type="method" value="X-ray"/>
    <property type="resolution" value="2.25 A"/>
    <property type="chains" value="H/h=1-65"/>
</dbReference>
<dbReference type="PDBsum" id="3A0B"/>
<dbReference type="PDBsum" id="3A0H"/>
<dbReference type="PDBsum" id="3WU2"/>
<dbReference type="PDBsum" id="4IL6"/>
<dbReference type="PDBsum" id="4UB6"/>
<dbReference type="PDBsum" id="4UB8"/>
<dbReference type="PDBsum" id="5B5E"/>
<dbReference type="PDBsum" id="5B66"/>
<dbReference type="PDBsum" id="5GTH"/>
<dbReference type="PDBsum" id="5GTI"/>
<dbReference type="PDBsum" id="5V2C"/>
<dbReference type="PDBsum" id="5WS5"/>
<dbReference type="PDBsum" id="5WS6"/>
<dbReference type="PDBsum" id="6JLJ"/>
<dbReference type="PDBsum" id="6JLK"/>
<dbReference type="PDBsum" id="6JLL"/>
<dbReference type="PDBsum" id="6JLM"/>
<dbReference type="PDBsum" id="6JLN"/>
<dbReference type="PDBsum" id="6JLO"/>
<dbReference type="PDBsum" id="6JLP"/>
<dbReference type="PDBsum" id="7CJI"/>
<dbReference type="PDBsum" id="7CJJ"/>
<dbReference type="PDBsum" id="7COU"/>
<dbReference type="PDBsum" id="7CZL"/>
<dbReference type="PDBsum" id="7D1T"/>
<dbReference type="PDBsum" id="7D1U"/>
<dbReference type="PDBsum" id="7DXA"/>
<dbReference type="PDBsum" id="7DXH"/>
<dbReference type="PDBsum" id="7EDA"/>
<dbReference type="PDBsum" id="8GN0"/>
<dbReference type="PDBsum" id="8GN1"/>
<dbReference type="PDBsum" id="8GN2"/>
<dbReference type="PDBsum" id="8IR5"/>
<dbReference type="PDBsum" id="8IR6"/>
<dbReference type="PDBsum" id="8IR7"/>
<dbReference type="PDBsum" id="8IR8"/>
<dbReference type="PDBsum" id="8IR9"/>
<dbReference type="PDBsum" id="8IRA"/>
<dbReference type="PDBsum" id="8IRB"/>
<dbReference type="PDBsum" id="8IRC"/>
<dbReference type="PDBsum" id="8IRD"/>
<dbReference type="PDBsum" id="8IRE"/>
<dbReference type="PDBsum" id="8IRF"/>
<dbReference type="PDBsum" id="8IRG"/>
<dbReference type="PDBsum" id="8IRH"/>
<dbReference type="PDBsum" id="8IRI"/>
<dbReference type="EMDB" id="EMD-30511"/>
<dbReference type="EMDB" id="EMD-30547"/>
<dbReference type="EMDB" id="EMD-30548"/>
<dbReference type="EMDB" id="EMD-30902"/>
<dbReference type="EMDB" id="EMD-30909"/>
<dbReference type="EMDB" id="EMD-31062"/>
<dbReference type="SMR" id="P19052"/>
<dbReference type="DIP" id="DIP-48867N"/>
<dbReference type="IntAct" id="P19052">
    <property type="interactions" value="1"/>
</dbReference>
<dbReference type="EvolutionaryTrace" id="P19052"/>
<dbReference type="GO" id="GO:0009523">
    <property type="term" value="C:photosystem II"/>
    <property type="evidence" value="ECO:0007669"/>
    <property type="project" value="UniProtKB-KW"/>
</dbReference>
<dbReference type="GO" id="GO:0031676">
    <property type="term" value="C:plasma membrane-derived thylakoid membrane"/>
    <property type="evidence" value="ECO:0007669"/>
    <property type="project" value="UniProtKB-SubCell"/>
</dbReference>
<dbReference type="GO" id="GO:0042301">
    <property type="term" value="F:phosphate ion binding"/>
    <property type="evidence" value="ECO:0007669"/>
    <property type="project" value="InterPro"/>
</dbReference>
<dbReference type="GO" id="GO:0015979">
    <property type="term" value="P:photosynthesis"/>
    <property type="evidence" value="ECO:0007669"/>
    <property type="project" value="UniProtKB-KW"/>
</dbReference>
<dbReference type="GO" id="GO:0050821">
    <property type="term" value="P:protein stabilization"/>
    <property type="evidence" value="ECO:0007669"/>
    <property type="project" value="InterPro"/>
</dbReference>
<dbReference type="Gene3D" id="1.20.5.880">
    <property type="entry name" value="Photosystem II reaction center protein H"/>
    <property type="match status" value="1"/>
</dbReference>
<dbReference type="HAMAP" id="MF_00752">
    <property type="entry name" value="PSII_PsbH"/>
    <property type="match status" value="1"/>
</dbReference>
<dbReference type="InterPro" id="IPR001056">
    <property type="entry name" value="PSII_PsbH"/>
</dbReference>
<dbReference type="InterPro" id="IPR036863">
    <property type="entry name" value="PSII_PsbH_sf"/>
</dbReference>
<dbReference type="NCBIfam" id="NF002728">
    <property type="entry name" value="PRK02624.1"/>
    <property type="match status" value="1"/>
</dbReference>
<dbReference type="PANTHER" id="PTHR34469">
    <property type="entry name" value="PHOTOSYSTEM II REACTION CENTER PROTEIN H"/>
    <property type="match status" value="1"/>
</dbReference>
<dbReference type="PANTHER" id="PTHR34469:SF4">
    <property type="entry name" value="PHOTOSYSTEM II REACTION CENTER PROTEIN H"/>
    <property type="match status" value="1"/>
</dbReference>
<dbReference type="Pfam" id="PF00737">
    <property type="entry name" value="PsbH"/>
    <property type="match status" value="1"/>
</dbReference>
<dbReference type="SUPFAM" id="SSF161025">
    <property type="entry name" value="Photosystem II 10 kDa phosphoprotein PsbH"/>
    <property type="match status" value="1"/>
</dbReference>
<name>PSBH_THEVL</name>
<comment type="function">
    <text evidence="1 4 6">One of the components of the core complex of photosystem II (PSII), required for its stability and/or assembly. PSII is a light-driven water:plastoquinone oxidoreductase that uses light energy to abstract electrons from H(2)O, generating O(2) and a proton gradient subsequently used for ATP formation. It consists of a core antenna complex that captures photons, and an electron transfer chain that converts photonic excitation into a charge separation.</text>
</comment>
<comment type="cofactor">
    <text evidence="3 4 5 6">PSII binds multiple chlorophylls, carotenoids and specific lipids.</text>
</comment>
<comment type="subunit">
    <text evidence="1 2 3 4 5 6">PSII is composed of 1 copy each of membrane proteins PsbA, PsbB, PsbC, PsbD, PsbE, PsbF, PsbH, PsbI, PsbJ, PsbK, PsbL, PsbM, PsbT, PsbX, PsbY, PsbZ, Psb30/Ycf12, peripheral proteins PsbO, CyanoQ (PsbQ), PsbU, PsbV and a large number of cofactors. It forms dimeric complexes.</text>
</comment>
<comment type="subcellular location">
    <subcellularLocation>
        <location evidence="1 3 4 5 6">Cellular thylakoid membrane</location>
        <topology evidence="1 3 4 5 6">Single-pass membrane protein</topology>
    </subcellularLocation>
</comment>
<comment type="similarity">
    <text evidence="1">Belongs to the PsbH family.</text>
</comment>
<reference key="1">
    <citation type="journal article" date="1989" name="FEBS Lett.">
        <title>Low-molecular-mass proteins in cyanobacterial photosystem II: identification of psbH and psbK gene products by N-terminal sequencing.</title>
        <authorList>
            <person name="Koike H."/>
            <person name="Mamada K."/>
            <person name="Ikeuchi M."/>
            <person name="Inoue Y."/>
        </authorList>
    </citation>
    <scope>PROTEIN SEQUENCE OF 1-20</scope>
</reference>
<reference key="2">
    <citation type="journal article" date="2002" name="Plant Cell Physiol.">
        <title>Low-molecular-mass polypeptide components of a photosystem II preparation from the thermophilic cyanobacterium Thermosynechococcus vulcanus.</title>
        <authorList>
            <person name="Kashino Y."/>
            <person name="Koike H."/>
            <person name="Yoshio M."/>
            <person name="Egashira H."/>
            <person name="Ikeuchi M."/>
            <person name="Pakrasi H.B."/>
            <person name="Satoh K."/>
        </authorList>
    </citation>
    <scope>PROTEIN SEQUENCE OF 1-9</scope>
    <scope>COMPOSITION OF PHOTOSYSTEM II</scope>
    <scope>SUBUNIT</scope>
</reference>
<reference key="3">
    <citation type="journal article" date="2003" name="Proc. Natl. Acad. Sci. U.S.A.">
        <title>Crystal structure of oxygen-evolving photosystem II from Thermosynechococcus vulcanus at 3.7-A resolution.</title>
        <authorList>
            <person name="Kamiya N."/>
            <person name="Shen J.-R."/>
        </authorList>
    </citation>
    <scope>X-RAY CRYSTALLOGRAPHY (3.70 ANGSTROMS) IN PHOTOSYSTEM II</scope>
    <scope>COFACTOR</scope>
    <scope>SUBUNIT</scope>
    <scope>SUBCELLULAR LOCATION</scope>
</reference>
<reference key="4">
    <citation type="journal article" date="2009" name="Proc. Natl. Acad. Sci. U.S.A.">
        <title>Location of chloride and its possible functions in oxygen-evolving photosystem II revealed by X-ray crystallography.</title>
        <authorList>
            <person name="Kawakami K."/>
            <person name="Umena Y."/>
            <person name="Kamiya N."/>
            <person name="Shen J.R."/>
        </authorList>
    </citation>
    <scope>X-RAY CRYSTALLOGRAPHY (3.70 ANGSTROMS) OF 1-64 IN PHOTOSYSTEM II</scope>
    <scope>FUNCTION</scope>
    <scope>COFACTOR</scope>
    <scope>SUBUNIT</scope>
    <scope>SUBCELLULAR LOCATION</scope>
</reference>
<reference key="5">
    <citation type="journal article" date="2011" name="Nature">
        <title>Crystal structure of oxygen-evolving photosystem II at a resolution of 1.9 A.</title>
        <authorList>
            <person name="Umena Y."/>
            <person name="Kawakami K."/>
            <person name="Shen J.R."/>
            <person name="Kamiya N."/>
        </authorList>
    </citation>
    <scope>X-RAY CRYSTALLOGRAPHY (1.90 ANGSTROMS) IN PHOTOSYSTEM II</scope>
    <scope>COFACTOR</scope>
    <scope>SUBUNIT</scope>
    <scope>SUBCELLULAR LOCATION</scope>
    <scope>TOPOLOGY</scope>
</reference>
<reference key="6">
    <citation type="journal article" date="2013" name="Proc. Natl. Acad. Sci. U.S.A.">
        <title>Structure of Sr-substituted photosystem II at 2.1 A resolution and its implications in the mechanism of water oxidation.</title>
        <authorList>
            <person name="Koua F.H."/>
            <person name="Umena Y."/>
            <person name="Kawakami K."/>
            <person name="Shen J.R."/>
        </authorList>
    </citation>
    <scope>X-RAY CRYSTALLOGRAPHY (2.1 ANGSTROMS) OF 1-63 IN PHOTOSYSTEM II</scope>
    <scope>FUNCTION</scope>
    <scope>COFACTOR</scope>
    <scope>SUBUNIT</scope>
    <scope>SUBCELLULAR LOCATION</scope>
</reference>
<accession>P19052</accession>
<accession>D0VWR6</accession>
<evidence type="ECO:0000255" key="1">
    <source>
        <dbReference type="HAMAP-Rule" id="MF_00752"/>
    </source>
</evidence>
<evidence type="ECO:0000269" key="2">
    <source>
    </source>
</evidence>
<evidence type="ECO:0000269" key="3">
    <source>
    </source>
</evidence>
<evidence type="ECO:0000269" key="4">
    <source>
    </source>
</evidence>
<evidence type="ECO:0000269" key="5">
    <source>
    </source>
</evidence>
<evidence type="ECO:0000269" key="6">
    <source>
    </source>
</evidence>
<evidence type="ECO:0007829" key="7">
    <source>
        <dbReference type="PDB" id="5B66"/>
    </source>
</evidence>
<evidence type="ECO:0007829" key="8">
    <source>
        <dbReference type="PDB" id="7DXA"/>
    </source>
</evidence>
<organism>
    <name type="scientific">Thermostichus vulcanus</name>
    <name type="common">Synechococcus vulcanus</name>
    <dbReference type="NCBI Taxonomy" id="32053"/>
    <lineage>
        <taxon>Bacteria</taxon>
        <taxon>Bacillati</taxon>
        <taxon>Cyanobacteriota</taxon>
        <taxon>Cyanophyceae</taxon>
        <taxon>Thermostichales</taxon>
        <taxon>Thermostichaceae</taxon>
        <taxon>Thermostichus</taxon>
    </lineage>
</organism>
<sequence length="65" mass="7223">ARRTWLGDILRPLNSEYGKVAPGWGTTPLMAVFMGLFLVFLLIILEIYNSTLILDGVNVSWKALG</sequence>
<feature type="chain" id="PRO_0000070549" description="Photosystem II reaction center protein H">
    <location>
        <begin position="1" status="less than"/>
        <end position="65"/>
    </location>
</feature>
<feature type="topological domain" description="Cytoplasmic" evidence="5">
    <location>
        <begin position="1"/>
        <end position="28"/>
    </location>
</feature>
<feature type="transmembrane region" description="Helical" evidence="5">
    <location>
        <begin position="29"/>
        <end position="44"/>
    </location>
</feature>
<feature type="topological domain" description="Lumenal" evidence="5">
    <location>
        <begin position="45"/>
        <end position="65"/>
    </location>
</feature>
<feature type="non-terminal residue">
    <location>
        <position position="1"/>
    </location>
</feature>
<feature type="helix" evidence="7">
    <location>
        <begin position="5"/>
        <end position="10"/>
    </location>
</feature>
<feature type="helix" evidence="7">
    <location>
        <begin position="11"/>
        <end position="14"/>
    </location>
</feature>
<feature type="strand" evidence="8">
    <location>
        <begin position="17"/>
        <end position="22"/>
    </location>
</feature>
<feature type="turn" evidence="7">
    <location>
        <begin position="23"/>
        <end position="26"/>
    </location>
</feature>
<feature type="helix" evidence="7">
    <location>
        <begin position="27"/>
        <end position="48"/>
    </location>
</feature>
<feature type="turn" evidence="7">
    <location>
        <begin position="61"/>
        <end position="63"/>
    </location>
</feature>
<gene>
    <name evidence="1" type="primary">psbH</name>
</gene>
<keyword id="KW-0002">3D-structure</keyword>
<keyword id="KW-0903">Direct protein sequencing</keyword>
<keyword id="KW-0472">Membrane</keyword>
<keyword id="KW-0602">Photosynthesis</keyword>
<keyword id="KW-0604">Photosystem II</keyword>
<keyword id="KW-0793">Thylakoid</keyword>
<keyword id="KW-0812">Transmembrane</keyword>
<keyword id="KW-1133">Transmembrane helix</keyword>
<protein>
    <recommendedName>
        <fullName evidence="1">Photosystem II reaction center protein H</fullName>
        <shortName evidence="1">PSII-H</shortName>
    </recommendedName>
</protein>